<evidence type="ECO:0000255" key="1">
    <source>
        <dbReference type="HAMAP-Rule" id="MF_01512"/>
    </source>
</evidence>
<evidence type="ECO:0000255" key="2">
    <source>
        <dbReference type="PROSITE-ProRule" id="PRU01163"/>
    </source>
</evidence>
<protein>
    <recommendedName>
        <fullName evidence="1">Metallothiol transferase FosB</fullName>
        <ecNumber evidence="1">2.5.1.-</ecNumber>
    </recommendedName>
    <alternativeName>
        <fullName evidence="1">Fosfomycin resistance protein</fullName>
    </alternativeName>
</protein>
<name>FOSB_BREBN</name>
<comment type="function">
    <text evidence="1">Metallothiol transferase which confers resistance to fosfomycin by catalyzing the addition of a thiol cofactor to fosfomycin. L-cysteine is probably the physiological thiol donor.</text>
</comment>
<comment type="cofactor">
    <cofactor evidence="1">
        <name>Mg(2+)</name>
        <dbReference type="ChEBI" id="CHEBI:18420"/>
    </cofactor>
</comment>
<comment type="subunit">
    <text evidence="1">Homodimer.</text>
</comment>
<comment type="subcellular location">
    <subcellularLocation>
        <location evidence="1">Cytoplasm</location>
    </subcellularLocation>
</comment>
<comment type="similarity">
    <text evidence="1">Belongs to the fosfomycin resistance protein family. FosB subfamily.</text>
</comment>
<reference key="1">
    <citation type="submission" date="2005-03" db="EMBL/GenBank/DDBJ databases">
        <title>Brevibacillus brevis strain 47, complete genome.</title>
        <authorList>
            <person name="Hosoyama A."/>
            <person name="Yamada R."/>
            <person name="Hongo Y."/>
            <person name="Terui Y."/>
            <person name="Ankai A."/>
            <person name="Masuyama W."/>
            <person name="Sekiguchi M."/>
            <person name="Takeda T."/>
            <person name="Asano K."/>
            <person name="Ohji S."/>
            <person name="Ichikawa N."/>
            <person name="Narita S."/>
            <person name="Aoki N."/>
            <person name="Miura H."/>
            <person name="Matsushita S."/>
            <person name="Sekigawa T."/>
            <person name="Yamagata H."/>
            <person name="Yoshikawa H."/>
            <person name="Udaka S."/>
            <person name="Tanikawa S."/>
            <person name="Fujita N."/>
        </authorList>
    </citation>
    <scope>NUCLEOTIDE SEQUENCE [LARGE SCALE GENOMIC DNA]</scope>
    <source>
        <strain>47 / JCM 6285 / NBRC 100599</strain>
    </source>
</reference>
<dbReference type="EC" id="2.5.1.-" evidence="1"/>
<dbReference type="EMBL" id="AP008955">
    <property type="protein sequence ID" value="BAH45387.1"/>
    <property type="molecule type" value="Genomic_DNA"/>
</dbReference>
<dbReference type="SMR" id="C0ZJ12"/>
<dbReference type="STRING" id="358681.BBR47_44100"/>
<dbReference type="KEGG" id="bbe:BBR47_44100"/>
<dbReference type="eggNOG" id="COG0346">
    <property type="taxonomic scope" value="Bacteria"/>
</dbReference>
<dbReference type="HOGENOM" id="CLU_121356_0_0_9"/>
<dbReference type="Proteomes" id="UP000001877">
    <property type="component" value="Chromosome"/>
</dbReference>
<dbReference type="GO" id="GO:0005737">
    <property type="term" value="C:cytoplasm"/>
    <property type="evidence" value="ECO:0007669"/>
    <property type="project" value="UniProtKB-SubCell"/>
</dbReference>
<dbReference type="GO" id="GO:0000287">
    <property type="term" value="F:magnesium ion binding"/>
    <property type="evidence" value="ECO:0007669"/>
    <property type="project" value="UniProtKB-UniRule"/>
</dbReference>
<dbReference type="GO" id="GO:0016765">
    <property type="term" value="F:transferase activity, transferring alkyl or aryl (other than methyl) groups"/>
    <property type="evidence" value="ECO:0007669"/>
    <property type="project" value="UniProtKB-UniRule"/>
</dbReference>
<dbReference type="GO" id="GO:0046677">
    <property type="term" value="P:response to antibiotic"/>
    <property type="evidence" value="ECO:0007669"/>
    <property type="project" value="UniProtKB-UniRule"/>
</dbReference>
<dbReference type="Gene3D" id="3.10.180.10">
    <property type="entry name" value="2,3-Dihydroxybiphenyl 1,2-Dioxygenase, domain 1"/>
    <property type="match status" value="1"/>
</dbReference>
<dbReference type="HAMAP" id="MF_01512">
    <property type="entry name" value="FosB"/>
    <property type="match status" value="1"/>
</dbReference>
<dbReference type="InterPro" id="IPR051332">
    <property type="entry name" value="Fosfomycin_Res_Enzymes"/>
</dbReference>
<dbReference type="InterPro" id="IPR029068">
    <property type="entry name" value="Glyas_Bleomycin-R_OHBP_Dase"/>
</dbReference>
<dbReference type="InterPro" id="IPR004360">
    <property type="entry name" value="Glyas_Fos-R_dOase_dom"/>
</dbReference>
<dbReference type="InterPro" id="IPR022858">
    <property type="entry name" value="Metallothiol_Trafse_FosB"/>
</dbReference>
<dbReference type="InterPro" id="IPR037523">
    <property type="entry name" value="VOC"/>
</dbReference>
<dbReference type="NCBIfam" id="NF003152">
    <property type="entry name" value="PRK04101.1"/>
    <property type="match status" value="1"/>
</dbReference>
<dbReference type="PANTHER" id="PTHR36113:SF6">
    <property type="entry name" value="FOSFOMYCIN RESISTANCE PROTEIN FOSX"/>
    <property type="match status" value="1"/>
</dbReference>
<dbReference type="PANTHER" id="PTHR36113">
    <property type="entry name" value="LYASE, PUTATIVE-RELATED-RELATED"/>
    <property type="match status" value="1"/>
</dbReference>
<dbReference type="Pfam" id="PF00903">
    <property type="entry name" value="Glyoxalase"/>
    <property type="match status" value="1"/>
</dbReference>
<dbReference type="SUPFAM" id="SSF54593">
    <property type="entry name" value="Glyoxalase/Bleomycin resistance protein/Dihydroxybiphenyl dioxygenase"/>
    <property type="match status" value="1"/>
</dbReference>
<dbReference type="PROSITE" id="PS51819">
    <property type="entry name" value="VOC"/>
    <property type="match status" value="1"/>
</dbReference>
<gene>
    <name evidence="1" type="primary">fosB</name>
    <name type="ordered locus">BBR47_44100</name>
</gene>
<sequence>MPQLQGLNHLLFSVSDLEKSFCFYRDVLHAKPLVRGRKLAYFDLNGYWLALNEEPDIPRNEIAHSYTHMAFTITEESFDEWYAHLEKHGVTILHGRDRSERDKRSIYFIDPDGHKFELHTGTLQDRLAYYRDEKHHMTFFE</sequence>
<keyword id="KW-0046">Antibiotic resistance</keyword>
<keyword id="KW-0963">Cytoplasm</keyword>
<keyword id="KW-0460">Magnesium</keyword>
<keyword id="KW-0479">Metal-binding</keyword>
<keyword id="KW-1185">Reference proteome</keyword>
<keyword id="KW-0808">Transferase</keyword>
<accession>C0ZJ12</accession>
<feature type="chain" id="PRO_0000383365" description="Metallothiol transferase FosB">
    <location>
        <begin position="1"/>
        <end position="141"/>
    </location>
</feature>
<feature type="domain" description="VOC" evidence="2">
    <location>
        <begin position="6"/>
        <end position="121"/>
    </location>
</feature>
<feature type="active site" description="Proton donor/acceptor" evidence="2">
    <location>
        <position position="117"/>
    </location>
</feature>
<feature type="binding site" evidence="1">
    <location>
        <position position="9"/>
    </location>
    <ligand>
        <name>Mg(2+)</name>
        <dbReference type="ChEBI" id="CHEBI:18420"/>
    </ligand>
</feature>
<feature type="binding site" evidence="1">
    <location>
        <position position="68"/>
    </location>
    <ligand>
        <name>Mg(2+)</name>
        <dbReference type="ChEBI" id="CHEBI:18420"/>
    </ligand>
</feature>
<feature type="binding site" evidence="1">
    <location>
        <position position="117"/>
    </location>
    <ligand>
        <name>Mg(2+)</name>
        <dbReference type="ChEBI" id="CHEBI:18420"/>
    </ligand>
</feature>
<organism>
    <name type="scientific">Brevibacillus brevis (strain 47 / JCM 6285 / NBRC 100599)</name>
    <dbReference type="NCBI Taxonomy" id="358681"/>
    <lineage>
        <taxon>Bacteria</taxon>
        <taxon>Bacillati</taxon>
        <taxon>Bacillota</taxon>
        <taxon>Bacilli</taxon>
        <taxon>Bacillales</taxon>
        <taxon>Paenibacillaceae</taxon>
        <taxon>Brevibacillus</taxon>
    </lineage>
</organism>
<proteinExistence type="inferred from homology"/>